<proteinExistence type="inferred from homology"/>
<reference key="1">
    <citation type="journal article" date="2005" name="Genome Res.">
        <title>Coping with cold: the genome of the versatile marine Antarctica bacterium Pseudoalteromonas haloplanktis TAC125.</title>
        <authorList>
            <person name="Medigue C."/>
            <person name="Krin E."/>
            <person name="Pascal G."/>
            <person name="Barbe V."/>
            <person name="Bernsel A."/>
            <person name="Bertin P.N."/>
            <person name="Cheung F."/>
            <person name="Cruveiller S."/>
            <person name="D'Amico S."/>
            <person name="Duilio A."/>
            <person name="Fang G."/>
            <person name="Feller G."/>
            <person name="Ho C."/>
            <person name="Mangenot S."/>
            <person name="Marino G."/>
            <person name="Nilsson J."/>
            <person name="Parrilli E."/>
            <person name="Rocha E.P.C."/>
            <person name="Rouy Z."/>
            <person name="Sekowska A."/>
            <person name="Tutino M.L."/>
            <person name="Vallenet D."/>
            <person name="von Heijne G."/>
            <person name="Danchin A."/>
        </authorList>
    </citation>
    <scope>NUCLEOTIDE SEQUENCE [LARGE SCALE GENOMIC DNA]</scope>
    <source>
        <strain>TAC 125</strain>
    </source>
</reference>
<feature type="chain" id="PRO_0000194285" description="Guanosine-5'-triphosphate,3'-diphosphate pyrophosphatase">
    <location>
        <begin position="1"/>
        <end position="497"/>
    </location>
</feature>
<name>GPPA_PSET1</name>
<sequence>MGQLKPQKNVYAVIDLGSNSFHMLIAKSIAGGLQTIGRVKRKVRLAAGLDIDNVLSSEAMHRGWECLALFAERLQDIPKQNITIVATATLRLASNADVFKAQAEKILGHKVNVISGELEARTIYKGVAHTSSCTGSQLVIDIGGASTEVIIGKNFDALLYKSLNIGCVTYLERYFKDCKLSNANFNTAIKAARTVIDEIASEYKVKGWQIASGASGTVQAIQEIMIAQNLDELLTLEKLYTIKKQSIAYKTIAALDLPGLSEDRRLVFVSGLAILIALFESLEIEKMGLAGGALREGVLYSMLPELHNSDIRKRTIDGFIDRYHVDQKQASRVASLVLNLASEVNESWPIKALNGLPLLTAVAQLHEIGLLIEYKQYHKHSAYILKNTEMPGFSQSEHKVIVAVAKGHRSDLQKGYFDSLGANSVLAQYLVRLIRIAVILCMRRQDDVLPEFAITVKDDVLNLQFENDWLKNHPLMASELQQESKQQAKLGWKLIVN</sequence>
<gene>
    <name evidence="1" type="primary">gppA</name>
    <name type="ordered locus">PSHAa0115</name>
</gene>
<organism>
    <name type="scientific">Pseudoalteromonas translucida (strain TAC 125)</name>
    <dbReference type="NCBI Taxonomy" id="326442"/>
    <lineage>
        <taxon>Bacteria</taxon>
        <taxon>Pseudomonadati</taxon>
        <taxon>Pseudomonadota</taxon>
        <taxon>Gammaproteobacteria</taxon>
        <taxon>Alteromonadales</taxon>
        <taxon>Pseudoalteromonadaceae</taxon>
        <taxon>Pseudoalteromonas</taxon>
    </lineage>
</organism>
<protein>
    <recommendedName>
        <fullName evidence="1">Guanosine-5'-triphosphate,3'-diphosphate pyrophosphatase</fullName>
        <ecNumber evidence="1">3.6.1.40</ecNumber>
    </recommendedName>
    <alternativeName>
        <fullName evidence="1">Guanosine pentaphosphate phosphohydrolase</fullName>
    </alternativeName>
    <alternativeName>
        <fullName evidence="1">pppGpp-5'-phosphohydrolase</fullName>
    </alternativeName>
</protein>
<keyword id="KW-0378">Hydrolase</keyword>
<keyword id="KW-1185">Reference proteome</keyword>
<dbReference type="EC" id="3.6.1.40" evidence="1"/>
<dbReference type="EMBL" id="CR954246">
    <property type="protein sequence ID" value="CAI85224.1"/>
    <property type="status" value="ALT_INIT"/>
    <property type="molecule type" value="Genomic_DNA"/>
</dbReference>
<dbReference type="SMR" id="Q3IDD5"/>
<dbReference type="STRING" id="326442.PSHAa0115"/>
<dbReference type="KEGG" id="pha:PSHAa0115"/>
<dbReference type="PATRIC" id="fig|326442.8.peg.114"/>
<dbReference type="eggNOG" id="COG0248">
    <property type="taxonomic scope" value="Bacteria"/>
</dbReference>
<dbReference type="HOGENOM" id="CLU_025908_4_0_6"/>
<dbReference type="BioCyc" id="PHAL326442:PSHA_RS00585-MONOMER"/>
<dbReference type="UniPathway" id="UPA00908">
    <property type="reaction ID" value="UER00885"/>
</dbReference>
<dbReference type="Proteomes" id="UP000006843">
    <property type="component" value="Chromosome I"/>
</dbReference>
<dbReference type="GO" id="GO:0008894">
    <property type="term" value="F:guanosine-5'-triphosphate,3'-diphosphate diphosphatase activity"/>
    <property type="evidence" value="ECO:0007669"/>
    <property type="project" value="UniProtKB-UniRule"/>
</dbReference>
<dbReference type="GO" id="GO:0015974">
    <property type="term" value="P:guanosine pentaphosphate catabolic process"/>
    <property type="evidence" value="ECO:0007669"/>
    <property type="project" value="InterPro"/>
</dbReference>
<dbReference type="GO" id="GO:0015970">
    <property type="term" value="P:guanosine tetraphosphate biosynthetic process"/>
    <property type="evidence" value="ECO:0007669"/>
    <property type="project" value="UniProtKB-UniRule"/>
</dbReference>
<dbReference type="GO" id="GO:0015949">
    <property type="term" value="P:nucleobase-containing small molecule interconversion"/>
    <property type="evidence" value="ECO:0007669"/>
    <property type="project" value="TreeGrafter"/>
</dbReference>
<dbReference type="FunFam" id="3.30.420.150:FF:000001">
    <property type="entry name" value="Guanosine-5'-triphosphate,3'-diphosphate pyrophosphatase"/>
    <property type="match status" value="1"/>
</dbReference>
<dbReference type="FunFam" id="3.30.420.40:FF:000023">
    <property type="entry name" value="Guanosine-5'-triphosphate,3'-diphosphate pyrophosphatase"/>
    <property type="match status" value="1"/>
</dbReference>
<dbReference type="Gene3D" id="3.30.420.40">
    <property type="match status" value="1"/>
</dbReference>
<dbReference type="Gene3D" id="3.30.420.150">
    <property type="entry name" value="Exopolyphosphatase. Domain 2"/>
    <property type="match status" value="1"/>
</dbReference>
<dbReference type="Gene3D" id="1.10.3210.10">
    <property type="entry name" value="Hypothetical protein af1432"/>
    <property type="match status" value="1"/>
</dbReference>
<dbReference type="HAMAP" id="MF_01550">
    <property type="entry name" value="GppA"/>
    <property type="match status" value="1"/>
</dbReference>
<dbReference type="InterPro" id="IPR043129">
    <property type="entry name" value="ATPase_NBD"/>
</dbReference>
<dbReference type="InterPro" id="IPR050273">
    <property type="entry name" value="GppA/Ppx_hydrolase"/>
</dbReference>
<dbReference type="InterPro" id="IPR023709">
    <property type="entry name" value="Guo-5TP_3DP_PyrP"/>
</dbReference>
<dbReference type="InterPro" id="IPR048950">
    <property type="entry name" value="Ppx_GppA_C"/>
</dbReference>
<dbReference type="InterPro" id="IPR003695">
    <property type="entry name" value="Ppx_GppA_N"/>
</dbReference>
<dbReference type="InterPro" id="IPR030673">
    <property type="entry name" value="PyroPPase_GppA_Ppx"/>
</dbReference>
<dbReference type="NCBIfam" id="NF008260">
    <property type="entry name" value="PRK11031.1"/>
    <property type="match status" value="1"/>
</dbReference>
<dbReference type="PANTHER" id="PTHR30005">
    <property type="entry name" value="EXOPOLYPHOSPHATASE"/>
    <property type="match status" value="1"/>
</dbReference>
<dbReference type="PANTHER" id="PTHR30005:SF0">
    <property type="entry name" value="RETROGRADE REGULATION PROTEIN 2"/>
    <property type="match status" value="1"/>
</dbReference>
<dbReference type="Pfam" id="PF02541">
    <property type="entry name" value="Ppx-GppA"/>
    <property type="match status" value="1"/>
</dbReference>
<dbReference type="Pfam" id="PF21447">
    <property type="entry name" value="Ppx-GppA_III"/>
    <property type="match status" value="1"/>
</dbReference>
<dbReference type="PIRSF" id="PIRSF001267">
    <property type="entry name" value="Pyrophosphatase_GppA_Ppx"/>
    <property type="match status" value="1"/>
</dbReference>
<dbReference type="SUPFAM" id="SSF53067">
    <property type="entry name" value="Actin-like ATPase domain"/>
    <property type="match status" value="2"/>
</dbReference>
<dbReference type="SUPFAM" id="SSF109604">
    <property type="entry name" value="HD-domain/PDEase-like"/>
    <property type="match status" value="1"/>
</dbReference>
<evidence type="ECO:0000255" key="1">
    <source>
        <dbReference type="HAMAP-Rule" id="MF_01550"/>
    </source>
</evidence>
<evidence type="ECO:0000305" key="2"/>
<comment type="function">
    <text evidence="1">Catalyzes the conversion of pppGpp to ppGpp. Guanosine pentaphosphate (pppGpp) is a cytoplasmic signaling molecule which together with ppGpp controls the 'stringent response', an adaptive process that allows bacteria to respond to amino acid starvation, resulting in the coordinated regulation of numerous cellular activities.</text>
</comment>
<comment type="catalytic activity">
    <reaction evidence="1">
        <text>guanosine 3'-diphosphate 5'-triphosphate + H2O = guanosine 3',5'-bis(diphosphate) + phosphate + H(+)</text>
        <dbReference type="Rhea" id="RHEA:13073"/>
        <dbReference type="ChEBI" id="CHEBI:15377"/>
        <dbReference type="ChEBI" id="CHEBI:15378"/>
        <dbReference type="ChEBI" id="CHEBI:43474"/>
        <dbReference type="ChEBI" id="CHEBI:77828"/>
        <dbReference type="ChEBI" id="CHEBI:142410"/>
        <dbReference type="EC" id="3.6.1.40"/>
    </reaction>
</comment>
<comment type="pathway">
    <text evidence="1">Purine metabolism; ppGpp biosynthesis; ppGpp from GTP: step 2/2.</text>
</comment>
<comment type="similarity">
    <text evidence="1">Belongs to the GppA/Ppx family. GppA subfamily.</text>
</comment>
<comment type="sequence caution" evidence="2">
    <conflict type="erroneous initiation">
        <sequence resource="EMBL-CDS" id="CAI85224"/>
    </conflict>
</comment>
<accession>Q3IDD5</accession>